<keyword id="KW-0479">Metal-binding</keyword>
<keyword id="KW-0520">NAD</keyword>
<keyword id="KW-0521">NADP</keyword>
<keyword id="KW-0558">Oxidation</keyword>
<keyword id="KW-0560">Oxidoreductase</keyword>
<keyword id="KW-0630">Potassium</keyword>
<reference key="1">
    <citation type="journal article" date="2003" name="Genome Res.">
        <title>Comparative genome analysis of Vibrio vulnificus, a marine pathogen.</title>
        <authorList>
            <person name="Chen C.-Y."/>
            <person name="Wu K.-M."/>
            <person name="Chang Y.-C."/>
            <person name="Chang C.-H."/>
            <person name="Tsai H.-C."/>
            <person name="Liao T.-L."/>
            <person name="Liu Y.-M."/>
            <person name="Chen H.-J."/>
            <person name="Shen A.B.-T."/>
            <person name="Li J.-C."/>
            <person name="Su T.-L."/>
            <person name="Shao C.-P."/>
            <person name="Lee C.-T."/>
            <person name="Hor L.-I."/>
            <person name="Tsai S.-F."/>
        </authorList>
    </citation>
    <scope>NUCLEOTIDE SEQUENCE [LARGE SCALE GENOMIC DNA]</scope>
    <source>
        <strain>YJ016</strain>
    </source>
</reference>
<evidence type="ECO:0000255" key="1">
    <source>
        <dbReference type="HAMAP-Rule" id="MF_00804"/>
    </source>
</evidence>
<feature type="chain" id="PRO_0000056557" description="Betaine aldehyde dehydrogenase">
    <location>
        <begin position="1"/>
        <end position="486"/>
    </location>
</feature>
<feature type="active site" description="Charge relay system" evidence="1">
    <location>
        <position position="159"/>
    </location>
</feature>
<feature type="active site" description="Proton acceptor" evidence="1">
    <location>
        <position position="247"/>
    </location>
</feature>
<feature type="active site" description="Nucleophile" evidence="1">
    <location>
        <position position="281"/>
    </location>
</feature>
<feature type="active site" description="Charge relay system" evidence="1">
    <location>
        <position position="459"/>
    </location>
</feature>
<feature type="binding site" evidence="1">
    <location>
        <position position="23"/>
    </location>
    <ligand>
        <name>K(+)</name>
        <dbReference type="ChEBI" id="CHEBI:29103"/>
        <label>1</label>
    </ligand>
</feature>
<feature type="binding site" evidence="1">
    <location>
        <position position="90"/>
    </location>
    <ligand>
        <name>K(+)</name>
        <dbReference type="ChEBI" id="CHEBI:29103"/>
        <label>1</label>
    </ligand>
</feature>
<feature type="binding site" evidence="1">
    <location>
        <begin position="147"/>
        <end position="149"/>
    </location>
    <ligand>
        <name>NAD(+)</name>
        <dbReference type="ChEBI" id="CHEBI:57540"/>
    </ligand>
</feature>
<feature type="binding site" evidence="1">
    <location>
        <begin position="173"/>
        <end position="176"/>
    </location>
    <ligand>
        <name>NAD(+)</name>
        <dbReference type="ChEBI" id="CHEBI:57540"/>
    </ligand>
</feature>
<feature type="binding site" evidence="1">
    <location>
        <begin position="226"/>
        <end position="229"/>
    </location>
    <ligand>
        <name>NAD(+)</name>
        <dbReference type="ChEBI" id="CHEBI:57540"/>
    </ligand>
</feature>
<feature type="binding site" evidence="1">
    <location>
        <position position="241"/>
    </location>
    <ligand>
        <name>K(+)</name>
        <dbReference type="ChEBI" id="CHEBI:29103"/>
        <label>2</label>
    </ligand>
</feature>
<feature type="binding site" evidence="1">
    <location>
        <position position="249"/>
    </location>
    <ligand>
        <name>NAD(+)</name>
        <dbReference type="ChEBI" id="CHEBI:57540"/>
    </ligand>
</feature>
<feature type="binding site" description="covalent" evidence="1">
    <location>
        <position position="281"/>
    </location>
    <ligand>
        <name>NAD(+)</name>
        <dbReference type="ChEBI" id="CHEBI:57540"/>
    </ligand>
</feature>
<feature type="binding site" evidence="1">
    <location>
        <position position="382"/>
    </location>
    <ligand>
        <name>NAD(+)</name>
        <dbReference type="ChEBI" id="CHEBI:57540"/>
    </ligand>
</feature>
<feature type="binding site" evidence="1">
    <location>
        <position position="452"/>
    </location>
    <ligand>
        <name>K(+)</name>
        <dbReference type="ChEBI" id="CHEBI:29103"/>
        <label>2</label>
    </ligand>
</feature>
<feature type="binding site" evidence="1">
    <location>
        <position position="455"/>
    </location>
    <ligand>
        <name>K(+)</name>
        <dbReference type="ChEBI" id="CHEBI:29103"/>
        <label>2</label>
    </ligand>
</feature>
<feature type="modified residue" description="Cysteine sulfenic acid (-SOH)" evidence="1">
    <location>
        <position position="281"/>
    </location>
</feature>
<sequence>MEVTAHYIGGKPFVGDTGESFATLNPATGEVLAHIEQADERVLAHAIESAKLGFSVWSSMSAAERSRCLLKAAQLIRDHNDELAELEVRDTGKPIQEASVVDIATGADVIEYFAGLVNGLGGEQQSLGSNQFFYTRREPLGICAGIGAWNYPIQIAMWKAAPALAAGNAMIFKPSEETPLSALKLAELFTQAGVPDGVFNVVQGDYRVGQMLTAHPEIAKVSFTGESGTGKKVMADSAATLKPVTMELGGKSPLIIFDDADLDDAVSAAMVANFYTQGEVCTHGTRVYVQRAMYDAFVEQLKERTEKLIVGDPMNMETQIGSLISKSHLEKVLGAISSAKESGATLLTGGFQVTERGLEKGCFVAPTVFVDCRDEMPHVQNEIFGPVMSVLVFDDEDEVIARANNTQYGLAAGVFTQNLSKAHRVIHQLQAGICWINTWGNSPAEMPVGGYKLSGIGRENGQETLLHYTQTKSVFVELGAFDSPYA</sequence>
<gene>
    <name evidence="1" type="primary">betB</name>
    <name type="ordered locus">VVA0507</name>
</gene>
<organism>
    <name type="scientific">Vibrio vulnificus (strain YJ016)</name>
    <dbReference type="NCBI Taxonomy" id="196600"/>
    <lineage>
        <taxon>Bacteria</taxon>
        <taxon>Pseudomonadati</taxon>
        <taxon>Pseudomonadota</taxon>
        <taxon>Gammaproteobacteria</taxon>
        <taxon>Vibrionales</taxon>
        <taxon>Vibrionaceae</taxon>
        <taxon>Vibrio</taxon>
    </lineage>
</organism>
<comment type="function">
    <text evidence="1">Involved in the biosynthesis of the osmoprotectant glycine betaine. Catalyzes the irreversible oxidation of betaine aldehyde to the corresponding acid.</text>
</comment>
<comment type="catalytic activity">
    <reaction evidence="1">
        <text>betaine aldehyde + NAD(+) + H2O = glycine betaine + NADH + 2 H(+)</text>
        <dbReference type="Rhea" id="RHEA:15305"/>
        <dbReference type="ChEBI" id="CHEBI:15377"/>
        <dbReference type="ChEBI" id="CHEBI:15378"/>
        <dbReference type="ChEBI" id="CHEBI:15710"/>
        <dbReference type="ChEBI" id="CHEBI:17750"/>
        <dbReference type="ChEBI" id="CHEBI:57540"/>
        <dbReference type="ChEBI" id="CHEBI:57945"/>
        <dbReference type="EC" id="1.2.1.8"/>
    </reaction>
    <physiologicalReaction direction="left-to-right" evidence="1">
        <dbReference type="Rhea" id="RHEA:15306"/>
    </physiologicalReaction>
</comment>
<comment type="cofactor">
    <cofactor evidence="1">
        <name>K(+)</name>
        <dbReference type="ChEBI" id="CHEBI:29103"/>
    </cofactor>
    <text evidence="1">Binds 2 potassium ions per subunit.</text>
</comment>
<comment type="pathway">
    <text evidence="1">Amine and polyamine biosynthesis; betaine biosynthesis via choline pathway; betaine from betaine aldehyde: step 1/1.</text>
</comment>
<comment type="subunit">
    <text evidence="1">Dimer of dimers.</text>
</comment>
<comment type="similarity">
    <text evidence="1">Belongs to the aldehyde dehydrogenase family.</text>
</comment>
<accession>Q7MF13</accession>
<proteinExistence type="inferred from homology"/>
<protein>
    <recommendedName>
        <fullName evidence="1">Betaine aldehyde dehydrogenase</fullName>
        <shortName evidence="1">BADH</shortName>
        <ecNumber evidence="1">1.2.1.8</ecNumber>
    </recommendedName>
</protein>
<name>BETB_VIBVY</name>
<dbReference type="EC" id="1.2.1.8" evidence="1"/>
<dbReference type="EMBL" id="BA000038">
    <property type="protein sequence ID" value="BAC96533.1"/>
    <property type="molecule type" value="Genomic_DNA"/>
</dbReference>
<dbReference type="RefSeq" id="WP_011151878.1">
    <property type="nucleotide sequence ID" value="NC_005140.1"/>
</dbReference>
<dbReference type="SMR" id="Q7MF13"/>
<dbReference type="STRING" id="672.VV93_v1c35140"/>
<dbReference type="KEGG" id="vvy:VVA0507"/>
<dbReference type="PATRIC" id="fig|196600.6.peg.3707"/>
<dbReference type="eggNOG" id="COG1012">
    <property type="taxonomic scope" value="Bacteria"/>
</dbReference>
<dbReference type="HOGENOM" id="CLU_005391_0_0_6"/>
<dbReference type="UniPathway" id="UPA00529">
    <property type="reaction ID" value="UER00386"/>
</dbReference>
<dbReference type="Proteomes" id="UP000002675">
    <property type="component" value="Chromosome II"/>
</dbReference>
<dbReference type="GO" id="GO:0008802">
    <property type="term" value="F:betaine-aldehyde dehydrogenase (NAD+) activity"/>
    <property type="evidence" value="ECO:0007669"/>
    <property type="project" value="UniProtKB-UniRule"/>
</dbReference>
<dbReference type="GO" id="GO:0046872">
    <property type="term" value="F:metal ion binding"/>
    <property type="evidence" value="ECO:0007669"/>
    <property type="project" value="UniProtKB-KW"/>
</dbReference>
<dbReference type="GO" id="GO:0019285">
    <property type="term" value="P:glycine betaine biosynthetic process from choline"/>
    <property type="evidence" value="ECO:0007669"/>
    <property type="project" value="UniProtKB-UniRule"/>
</dbReference>
<dbReference type="FunFam" id="3.40.605.10:FF:000026">
    <property type="entry name" value="Aldehyde dehydrogenase, putative"/>
    <property type="match status" value="1"/>
</dbReference>
<dbReference type="FunFam" id="3.40.309.10:FF:000014">
    <property type="entry name" value="NAD/NADP-dependent betaine aldehyde dehydrogenase"/>
    <property type="match status" value="1"/>
</dbReference>
<dbReference type="FunFam" id="3.40.605.10:FF:000007">
    <property type="entry name" value="NAD/NADP-dependent betaine aldehyde dehydrogenase"/>
    <property type="match status" value="1"/>
</dbReference>
<dbReference type="Gene3D" id="3.40.605.10">
    <property type="entry name" value="Aldehyde Dehydrogenase, Chain A, domain 1"/>
    <property type="match status" value="1"/>
</dbReference>
<dbReference type="Gene3D" id="3.40.309.10">
    <property type="entry name" value="Aldehyde Dehydrogenase, Chain A, domain 2"/>
    <property type="match status" value="1"/>
</dbReference>
<dbReference type="HAMAP" id="MF_00804">
    <property type="entry name" value="BADH"/>
    <property type="match status" value="1"/>
</dbReference>
<dbReference type="InterPro" id="IPR016161">
    <property type="entry name" value="Ald_DH/histidinol_DH"/>
</dbReference>
<dbReference type="InterPro" id="IPR016163">
    <property type="entry name" value="Ald_DH_C"/>
</dbReference>
<dbReference type="InterPro" id="IPR029510">
    <property type="entry name" value="Ald_DH_CS_GLU"/>
</dbReference>
<dbReference type="InterPro" id="IPR016162">
    <property type="entry name" value="Ald_DH_N"/>
</dbReference>
<dbReference type="InterPro" id="IPR015590">
    <property type="entry name" value="Aldehyde_DH_dom"/>
</dbReference>
<dbReference type="InterPro" id="IPR011264">
    <property type="entry name" value="BADH"/>
</dbReference>
<dbReference type="NCBIfam" id="NF009725">
    <property type="entry name" value="PRK13252.1"/>
    <property type="match status" value="1"/>
</dbReference>
<dbReference type="PANTHER" id="PTHR11699">
    <property type="entry name" value="ALDEHYDE DEHYDROGENASE-RELATED"/>
    <property type="match status" value="1"/>
</dbReference>
<dbReference type="Pfam" id="PF00171">
    <property type="entry name" value="Aldedh"/>
    <property type="match status" value="1"/>
</dbReference>
<dbReference type="SUPFAM" id="SSF53720">
    <property type="entry name" value="ALDH-like"/>
    <property type="match status" value="1"/>
</dbReference>
<dbReference type="PROSITE" id="PS00687">
    <property type="entry name" value="ALDEHYDE_DEHYDR_GLU"/>
    <property type="match status" value="1"/>
</dbReference>